<evidence type="ECO:0000250" key="1">
    <source>
        <dbReference type="UniProtKB" id="P00403"/>
    </source>
</evidence>
<evidence type="ECO:0000250" key="2">
    <source>
        <dbReference type="UniProtKB" id="P00410"/>
    </source>
</evidence>
<evidence type="ECO:0000250" key="3">
    <source>
        <dbReference type="UniProtKB" id="P68530"/>
    </source>
</evidence>
<evidence type="ECO:0000305" key="4"/>
<gene>
    <name type="primary">mt-co2</name>
    <name type="synonym">coii</name>
    <name type="synonym">coxii</name>
    <name type="synonym">mtco2</name>
</gene>
<comment type="function">
    <text evidence="2">Component of the cytochrome c oxidase, the last enzyme in the mitochondrial electron transport chain which drives oxidative phosphorylation. The respiratory chain contains 3 multisubunit complexes succinate dehydrogenase (complex II, CII), ubiquinol-cytochrome c oxidoreductase (cytochrome b-c1 complex, complex III, CIII) and cytochrome c oxidase (complex IV, CIV), that cooperate to transfer electrons derived from NADH and succinate to molecular oxygen, creating an electrochemical gradient over the inner membrane that drives transmembrane transport and the ATP synthase. Cytochrome c oxidase is the component of the respiratory chain that catalyzes the reduction of oxygen to water. Electrons originating from reduced cytochrome c in the intermembrane space (IMS) are transferred via the dinuclear copper A center (CU(A)) of subunit 2 and heme A of subunit 1 to the active site in subunit 1, a binuclear center (BNC) formed by heme A3 and copper B (CU(B)). The BNC reduces molecular oxygen to 2 water molecules using 4 electrons from cytochrome c in the IMS and 4 protons from the mitochondrial matrix.</text>
</comment>
<comment type="catalytic activity">
    <reaction evidence="2">
        <text>4 Fe(II)-[cytochrome c] + O2 + 8 H(+)(in) = 4 Fe(III)-[cytochrome c] + 2 H2O + 4 H(+)(out)</text>
        <dbReference type="Rhea" id="RHEA:11436"/>
        <dbReference type="Rhea" id="RHEA-COMP:10350"/>
        <dbReference type="Rhea" id="RHEA-COMP:14399"/>
        <dbReference type="ChEBI" id="CHEBI:15377"/>
        <dbReference type="ChEBI" id="CHEBI:15378"/>
        <dbReference type="ChEBI" id="CHEBI:15379"/>
        <dbReference type="ChEBI" id="CHEBI:29033"/>
        <dbReference type="ChEBI" id="CHEBI:29034"/>
        <dbReference type="EC" id="7.1.1.9"/>
    </reaction>
    <physiologicalReaction direction="left-to-right" evidence="2">
        <dbReference type="Rhea" id="RHEA:11437"/>
    </physiologicalReaction>
</comment>
<comment type="cofactor">
    <cofactor evidence="3">
        <name>Cu cation</name>
        <dbReference type="ChEBI" id="CHEBI:23378"/>
    </cofactor>
    <text evidence="3">Binds a dinuclear copper A center per subunit.</text>
</comment>
<comment type="subunit">
    <text evidence="1 3">Component of the cytochrome c oxidase (complex IV, CIV), a multisubunit enzyme composed of 14 subunits. The complex is composed of a catalytic core of 3 subunits MT-CO1, MT-CO2 and MT-CO3, encoded in the mitochondrial DNA, and 11 supernumerary subunits COX4I, COX5A, COX5B, COX6A, COX6B, COX6C, COX7A, COX7B, COX7C, COX8 and NDUFA4, which are encoded in the nuclear genome. The complex exists as a monomer or a dimer and forms supercomplexes (SCs) in the inner mitochondrial membrane with NADH-ubiquinone oxidoreductase (complex I, CI) and ubiquinol-cytochrome c oxidoreductase (cytochrome b-c1 complex, complex III, CIII), resulting in different assemblies (supercomplex SCI(1)III(2)IV(1) and megacomplex MCI(2)III(2)IV(2)) (By similarity). Found in a complex with TMEM177, COA6, COX18, COX20, SCO1 and SCO2. Interacts with TMEM177 in a COX20-dependent manner. Interacts with COX20. Interacts with COX16 (By similarity).</text>
</comment>
<comment type="subcellular location">
    <subcellularLocation>
        <location evidence="3">Mitochondrion inner membrane</location>
        <topology evidence="3">Multi-pass membrane protein</topology>
    </subcellularLocation>
</comment>
<comment type="similarity">
    <text evidence="4">Belongs to the cytochrome c oxidase subunit 2 family.</text>
</comment>
<protein>
    <recommendedName>
        <fullName>Cytochrome c oxidase subunit 2</fullName>
        <ecNumber>7.1.1.9</ecNumber>
    </recommendedName>
    <alternativeName>
        <fullName>Cytochrome c oxidase polypeptide II</fullName>
    </alternativeName>
</protein>
<name>COX2_ONCMY</name>
<reference key="1">
    <citation type="journal article" date="1995" name="J. Mol. Evol.">
        <title>The complete nucleotide sequence of the mitochondrial DNA genome of the rainbow trout, Oncorhynchus mykiss.</title>
        <authorList>
            <person name="Zardoya R."/>
            <person name="Garrido-Pertierra A."/>
            <person name="Bautista J.M."/>
        </authorList>
    </citation>
    <scope>NUCLEOTIDE SEQUENCE [GENOMIC DNA]</scope>
    <source>
        <tissue>Liver</tissue>
    </source>
</reference>
<proteinExistence type="inferred from homology"/>
<organism>
    <name type="scientific">Oncorhynchus mykiss</name>
    <name type="common">Rainbow trout</name>
    <name type="synonym">Salmo gairdneri</name>
    <dbReference type="NCBI Taxonomy" id="8022"/>
    <lineage>
        <taxon>Eukaryota</taxon>
        <taxon>Metazoa</taxon>
        <taxon>Chordata</taxon>
        <taxon>Craniata</taxon>
        <taxon>Vertebrata</taxon>
        <taxon>Euteleostomi</taxon>
        <taxon>Actinopterygii</taxon>
        <taxon>Neopterygii</taxon>
        <taxon>Teleostei</taxon>
        <taxon>Protacanthopterygii</taxon>
        <taxon>Salmoniformes</taxon>
        <taxon>Salmonidae</taxon>
        <taxon>Salmoninae</taxon>
        <taxon>Oncorhynchus</taxon>
    </lineage>
</organism>
<sequence length="230" mass="26029">MAHPSQLGFQDAASPVMEELLHFHDHALMIVLLISTLVLYIIVAMVSTKLTNMYILDSQEIEIVWTVLPAVILILIALPSLRILYLMDEINDPHLTIKAMGHQWYWSYEYTDYEDLGFDSYMVPTQDLVPGQFRLLETDHRMVVPVESPIRVLVSAEDVLHSWAVPSLGVKMDAVPGRLNQTAFIASRPGVFYGQCSEICGANHSFMPIVVEAVPLEHFEKWSTMMLEDA</sequence>
<keyword id="KW-0186">Copper</keyword>
<keyword id="KW-0249">Electron transport</keyword>
<keyword id="KW-0460">Magnesium</keyword>
<keyword id="KW-0472">Membrane</keyword>
<keyword id="KW-0479">Metal-binding</keyword>
<keyword id="KW-0496">Mitochondrion</keyword>
<keyword id="KW-0999">Mitochondrion inner membrane</keyword>
<keyword id="KW-0679">Respiratory chain</keyword>
<keyword id="KW-1278">Translocase</keyword>
<keyword id="KW-0812">Transmembrane</keyword>
<keyword id="KW-1133">Transmembrane helix</keyword>
<keyword id="KW-0813">Transport</keyword>
<feature type="chain" id="PRO_0000183644" description="Cytochrome c oxidase subunit 2">
    <location>
        <begin position="1"/>
        <end position="230"/>
    </location>
</feature>
<feature type="topological domain" description="Mitochondrial intermembrane" evidence="3">
    <location>
        <begin position="1"/>
        <end position="14"/>
    </location>
</feature>
<feature type="transmembrane region" description="Helical; Name=I" evidence="3">
    <location>
        <begin position="15"/>
        <end position="45"/>
    </location>
</feature>
<feature type="topological domain" description="Mitochondrial matrix" evidence="3">
    <location>
        <begin position="46"/>
        <end position="59"/>
    </location>
</feature>
<feature type="transmembrane region" description="Helical; Name=II" evidence="3">
    <location>
        <begin position="60"/>
        <end position="87"/>
    </location>
</feature>
<feature type="topological domain" description="Mitochondrial intermembrane" evidence="3">
    <location>
        <begin position="88"/>
        <end position="230"/>
    </location>
</feature>
<feature type="binding site" evidence="3">
    <location>
        <position position="161"/>
    </location>
    <ligand>
        <name>Cu cation</name>
        <dbReference type="ChEBI" id="CHEBI:23378"/>
        <label>A1</label>
    </ligand>
</feature>
<feature type="binding site" evidence="3">
    <location>
        <position position="196"/>
    </location>
    <ligand>
        <name>Cu cation</name>
        <dbReference type="ChEBI" id="CHEBI:23378"/>
        <label>A1</label>
    </ligand>
</feature>
<feature type="binding site" evidence="3">
    <location>
        <position position="196"/>
    </location>
    <ligand>
        <name>Cu cation</name>
        <dbReference type="ChEBI" id="CHEBI:23378"/>
        <label>A2</label>
    </ligand>
</feature>
<feature type="binding site" evidence="3">
    <location>
        <position position="198"/>
    </location>
    <ligand>
        <name>Cu cation</name>
        <dbReference type="ChEBI" id="CHEBI:23378"/>
        <label>A2</label>
    </ligand>
</feature>
<feature type="binding site" evidence="3">
    <location>
        <position position="198"/>
    </location>
    <ligand>
        <name>Mg(2+)</name>
        <dbReference type="ChEBI" id="CHEBI:18420"/>
        <note>ligand shared with MT-CO1</note>
    </ligand>
</feature>
<feature type="binding site" evidence="3">
    <location>
        <position position="200"/>
    </location>
    <ligand>
        <name>Cu cation</name>
        <dbReference type="ChEBI" id="CHEBI:23378"/>
        <label>A1</label>
    </ligand>
</feature>
<feature type="binding site" evidence="3">
    <location>
        <position position="200"/>
    </location>
    <ligand>
        <name>Cu cation</name>
        <dbReference type="ChEBI" id="CHEBI:23378"/>
        <label>A2</label>
    </ligand>
</feature>
<feature type="binding site" evidence="3">
    <location>
        <position position="204"/>
    </location>
    <ligand>
        <name>Cu cation</name>
        <dbReference type="ChEBI" id="CHEBI:23378"/>
        <label>A2</label>
    </ligand>
</feature>
<feature type="binding site" evidence="3">
    <location>
        <position position="207"/>
    </location>
    <ligand>
        <name>Cu cation</name>
        <dbReference type="ChEBI" id="CHEBI:23378"/>
        <label>A1</label>
    </ligand>
</feature>
<accession>P48171</accession>
<dbReference type="EC" id="7.1.1.9"/>
<dbReference type="EMBL" id="L29771">
    <property type="protein sequence ID" value="AAB03350.1"/>
    <property type="molecule type" value="Genomic_DNA"/>
</dbReference>
<dbReference type="PIR" id="T09860">
    <property type="entry name" value="T09860"/>
</dbReference>
<dbReference type="RefSeq" id="NP_008293.1">
    <property type="nucleotide sequence ID" value="NC_001717.1"/>
</dbReference>
<dbReference type="SMR" id="P48171"/>
<dbReference type="GeneID" id="807980"/>
<dbReference type="KEGG" id="omy:807980"/>
<dbReference type="CTD" id="4513"/>
<dbReference type="OrthoDB" id="539285at2759"/>
<dbReference type="Proteomes" id="UP000694395">
    <property type="component" value="Unplaced"/>
</dbReference>
<dbReference type="GO" id="GO:0005743">
    <property type="term" value="C:mitochondrial inner membrane"/>
    <property type="evidence" value="ECO:0007669"/>
    <property type="project" value="UniProtKB-SubCell"/>
</dbReference>
<dbReference type="GO" id="GO:0045277">
    <property type="term" value="C:respiratory chain complex IV"/>
    <property type="evidence" value="ECO:0000250"/>
    <property type="project" value="UniProtKB"/>
</dbReference>
<dbReference type="GO" id="GO:0005507">
    <property type="term" value="F:copper ion binding"/>
    <property type="evidence" value="ECO:0007669"/>
    <property type="project" value="InterPro"/>
</dbReference>
<dbReference type="GO" id="GO:0004129">
    <property type="term" value="F:cytochrome-c oxidase activity"/>
    <property type="evidence" value="ECO:0007669"/>
    <property type="project" value="UniProtKB-EC"/>
</dbReference>
<dbReference type="GO" id="GO:0042773">
    <property type="term" value="P:ATP synthesis coupled electron transport"/>
    <property type="evidence" value="ECO:0007669"/>
    <property type="project" value="TreeGrafter"/>
</dbReference>
<dbReference type="CDD" id="cd13912">
    <property type="entry name" value="CcO_II_C"/>
    <property type="match status" value="1"/>
</dbReference>
<dbReference type="FunFam" id="1.10.287.90:FF:000001">
    <property type="entry name" value="Cytochrome c oxidase subunit 2"/>
    <property type="match status" value="1"/>
</dbReference>
<dbReference type="FunFam" id="2.60.40.420:FF:000001">
    <property type="entry name" value="Cytochrome c oxidase subunit 2"/>
    <property type="match status" value="1"/>
</dbReference>
<dbReference type="Gene3D" id="1.10.287.90">
    <property type="match status" value="1"/>
</dbReference>
<dbReference type="Gene3D" id="2.60.40.420">
    <property type="entry name" value="Cupredoxins - blue copper proteins"/>
    <property type="match status" value="1"/>
</dbReference>
<dbReference type="InterPro" id="IPR045187">
    <property type="entry name" value="CcO_II"/>
</dbReference>
<dbReference type="InterPro" id="IPR002429">
    <property type="entry name" value="CcO_II-like_C"/>
</dbReference>
<dbReference type="InterPro" id="IPR034210">
    <property type="entry name" value="CcO_II_C"/>
</dbReference>
<dbReference type="InterPro" id="IPR001505">
    <property type="entry name" value="Copper_CuA"/>
</dbReference>
<dbReference type="InterPro" id="IPR008972">
    <property type="entry name" value="Cupredoxin"/>
</dbReference>
<dbReference type="InterPro" id="IPR014222">
    <property type="entry name" value="Cyt_c_oxidase_su2"/>
</dbReference>
<dbReference type="InterPro" id="IPR011759">
    <property type="entry name" value="Cyt_c_oxidase_su2_TM_dom"/>
</dbReference>
<dbReference type="InterPro" id="IPR036257">
    <property type="entry name" value="Cyt_c_oxidase_su2_TM_sf"/>
</dbReference>
<dbReference type="NCBIfam" id="TIGR02866">
    <property type="entry name" value="CoxB"/>
    <property type="match status" value="1"/>
</dbReference>
<dbReference type="PANTHER" id="PTHR22888:SF9">
    <property type="entry name" value="CYTOCHROME C OXIDASE SUBUNIT 2"/>
    <property type="match status" value="1"/>
</dbReference>
<dbReference type="PANTHER" id="PTHR22888">
    <property type="entry name" value="CYTOCHROME C OXIDASE, SUBUNIT II"/>
    <property type="match status" value="1"/>
</dbReference>
<dbReference type="Pfam" id="PF00116">
    <property type="entry name" value="COX2"/>
    <property type="match status" value="1"/>
</dbReference>
<dbReference type="Pfam" id="PF02790">
    <property type="entry name" value="COX2_TM"/>
    <property type="match status" value="1"/>
</dbReference>
<dbReference type="PRINTS" id="PR01166">
    <property type="entry name" value="CYCOXIDASEII"/>
</dbReference>
<dbReference type="SUPFAM" id="SSF49503">
    <property type="entry name" value="Cupredoxins"/>
    <property type="match status" value="1"/>
</dbReference>
<dbReference type="SUPFAM" id="SSF81464">
    <property type="entry name" value="Cytochrome c oxidase subunit II-like, transmembrane region"/>
    <property type="match status" value="1"/>
</dbReference>
<dbReference type="PROSITE" id="PS00078">
    <property type="entry name" value="COX2"/>
    <property type="match status" value="1"/>
</dbReference>
<dbReference type="PROSITE" id="PS50857">
    <property type="entry name" value="COX2_CUA"/>
    <property type="match status" value="1"/>
</dbReference>
<dbReference type="PROSITE" id="PS50999">
    <property type="entry name" value="COX2_TM"/>
    <property type="match status" value="1"/>
</dbReference>
<geneLocation type="mitochondrion"/>